<sequence>MQHTSSDTLSENSIKLLQITDTHLFASDEGSLLSVKTLQSFQAVVEQVMARHVEFDYLLATGDISQDHSAASYQRFADGIAPLEKACFWLPGNHDYKPNMSSVLPSPQITTPEQVELNAHWQLILLDSQVVGVPHGRLSDQQLLMLEHHLQASPEKNTLILLHHHPLLVGSAWLDQHTLKDAEAFWQIVERFPMVKGIVCGHVHQDMNVMHKGIRVMATPSTCVQFKPKSDDFALDTVSPGWRELTLHANGEITTQVQRLASGSFLPDFTSSGY</sequence>
<organism>
    <name type="scientific">Vibrio vulnificus (strain CMCP6)</name>
    <dbReference type="NCBI Taxonomy" id="216895"/>
    <lineage>
        <taxon>Bacteria</taxon>
        <taxon>Pseudomonadati</taxon>
        <taxon>Pseudomonadota</taxon>
        <taxon>Gammaproteobacteria</taxon>
        <taxon>Vibrionales</taxon>
        <taxon>Vibrionaceae</taxon>
        <taxon>Vibrio</taxon>
    </lineage>
</organism>
<comment type="function">
    <text evidence="3">Hydrolyzes cAMP to 5'-AMP. Plays an important regulatory role in modulating the intracellular concentration of cAMP, thereby influencing cAMP-dependent processes.</text>
</comment>
<comment type="catalytic activity">
    <reaction evidence="1">
        <text>3',5'-cyclic AMP + H2O = AMP + H(+)</text>
        <dbReference type="Rhea" id="RHEA:25277"/>
        <dbReference type="ChEBI" id="CHEBI:15377"/>
        <dbReference type="ChEBI" id="CHEBI:15378"/>
        <dbReference type="ChEBI" id="CHEBI:58165"/>
        <dbReference type="ChEBI" id="CHEBI:456215"/>
        <dbReference type="EC" id="3.1.4.53"/>
    </reaction>
</comment>
<comment type="cofactor">
    <cofactor evidence="1">
        <name>Fe(2+)</name>
        <dbReference type="ChEBI" id="CHEBI:29033"/>
    </cofactor>
    <text evidence="1">Binds 2 Fe(2+) ions per subunit.</text>
</comment>
<comment type="induction">
    <text evidence="2">Positively regulated by the cAMP-CRP complex.</text>
</comment>
<comment type="disruption phenotype">
    <text evidence="2">Mutants show increased levels of cellular cAMP.</text>
</comment>
<comment type="similarity">
    <text evidence="1">Belongs to the cyclic nucleotide phosphodiesterase class-III family.</text>
</comment>
<reference key="1">
    <citation type="submission" date="2002-12" db="EMBL/GenBank/DDBJ databases">
        <title>Complete genome sequence of Vibrio vulnificus CMCP6.</title>
        <authorList>
            <person name="Rhee J.H."/>
            <person name="Kim S.Y."/>
            <person name="Chung S.S."/>
            <person name="Kim J.J."/>
            <person name="Moon Y.H."/>
            <person name="Jeong H."/>
            <person name="Choy H.E."/>
        </authorList>
    </citation>
    <scope>NUCLEOTIDE SEQUENCE [LARGE SCALE GENOMIC DNA]</scope>
    <source>
        <strain>CMCP6</strain>
    </source>
</reference>
<reference key="2">
    <citation type="journal article" date="2009" name="J. Bacteriol.">
        <title>Expression of the cpdA gene, encoding a 3',5'-cyclic AMP (cAMP) phosphodiesterase, is positively regulated by the cAMP-cAMP receptor protein complex.</title>
        <authorList>
            <person name="Kim H.S."/>
            <person name="Kim S.M."/>
            <person name="Lee H.J."/>
            <person name="Park S.J."/>
            <person name="Lee K.H."/>
        </authorList>
    </citation>
    <scope>FUNCTION</scope>
    <scope>INDUCTION</scope>
    <scope>DISRUPTION PHENOTYPE</scope>
    <source>
        <strain>ATCC 29307 / CDC A8694</strain>
    </source>
</reference>
<feature type="chain" id="PRO_0000413383" description="3',5'-cyclic adenosine monophosphate phosphodiesterase CpdA">
    <location>
        <begin position="1"/>
        <end position="274"/>
    </location>
</feature>
<feature type="binding site" evidence="1">
    <location>
        <position position="21"/>
    </location>
    <ligand>
        <name>Fe cation</name>
        <dbReference type="ChEBI" id="CHEBI:24875"/>
        <label>1</label>
    </ligand>
</feature>
<feature type="binding site" evidence="1">
    <location>
        <position position="23"/>
    </location>
    <ligand>
        <name>AMP</name>
        <dbReference type="ChEBI" id="CHEBI:456215"/>
    </ligand>
</feature>
<feature type="binding site" evidence="1">
    <location>
        <position position="23"/>
    </location>
    <ligand>
        <name>Fe cation</name>
        <dbReference type="ChEBI" id="CHEBI:24875"/>
        <label>1</label>
    </ligand>
</feature>
<feature type="binding site" evidence="1">
    <location>
        <position position="63"/>
    </location>
    <ligand>
        <name>AMP</name>
        <dbReference type="ChEBI" id="CHEBI:456215"/>
    </ligand>
</feature>
<feature type="binding site" evidence="1">
    <location>
        <position position="63"/>
    </location>
    <ligand>
        <name>Fe cation</name>
        <dbReference type="ChEBI" id="CHEBI:24875"/>
        <label>1</label>
    </ligand>
</feature>
<feature type="binding site" evidence="1">
    <location>
        <position position="63"/>
    </location>
    <ligand>
        <name>Fe cation</name>
        <dbReference type="ChEBI" id="CHEBI:24875"/>
        <label>2</label>
    </ligand>
</feature>
<feature type="binding site" evidence="1">
    <location>
        <begin position="93"/>
        <end position="94"/>
    </location>
    <ligand>
        <name>AMP</name>
        <dbReference type="ChEBI" id="CHEBI:456215"/>
    </ligand>
</feature>
<feature type="binding site" evidence="1">
    <location>
        <position position="93"/>
    </location>
    <ligand>
        <name>Fe cation</name>
        <dbReference type="ChEBI" id="CHEBI:24875"/>
        <label>2</label>
    </ligand>
</feature>
<feature type="binding site" evidence="1">
    <location>
        <position position="163"/>
    </location>
    <ligand>
        <name>Fe cation</name>
        <dbReference type="ChEBI" id="CHEBI:24875"/>
        <label>2</label>
    </ligand>
</feature>
<feature type="binding site" evidence="1">
    <location>
        <position position="202"/>
    </location>
    <ligand>
        <name>Fe cation</name>
        <dbReference type="ChEBI" id="CHEBI:24875"/>
        <label>2</label>
    </ligand>
</feature>
<feature type="binding site" evidence="1">
    <location>
        <position position="204"/>
    </location>
    <ligand>
        <name>AMP</name>
        <dbReference type="ChEBI" id="CHEBI:456215"/>
    </ligand>
</feature>
<feature type="binding site" evidence="1">
    <location>
        <position position="204"/>
    </location>
    <ligand>
        <name>Fe cation</name>
        <dbReference type="ChEBI" id="CHEBI:24875"/>
        <label>1</label>
    </ligand>
</feature>
<keyword id="KW-0114">cAMP</keyword>
<keyword id="KW-0378">Hydrolase</keyword>
<keyword id="KW-0408">Iron</keyword>
<keyword id="KW-0479">Metal-binding</keyword>
<keyword id="KW-0547">Nucleotide-binding</keyword>
<proteinExistence type="evidence at transcript level"/>
<dbReference type="EC" id="3.1.4.53" evidence="1"/>
<dbReference type="EMBL" id="AE016795">
    <property type="protein sequence ID" value="AAO09123.1"/>
    <property type="molecule type" value="Genomic_DNA"/>
</dbReference>
<dbReference type="RefSeq" id="WP_011078692.1">
    <property type="nucleotide sequence ID" value="NC_004459.3"/>
</dbReference>
<dbReference type="SMR" id="Q8DEI1"/>
<dbReference type="KEGG" id="vvu:VV1_0608"/>
<dbReference type="HOGENOM" id="CLU_070320_0_0_6"/>
<dbReference type="Proteomes" id="UP000002275">
    <property type="component" value="Chromosome 1"/>
</dbReference>
<dbReference type="GO" id="GO:0004115">
    <property type="term" value="F:3',5'-cyclic-AMP phosphodiesterase activity"/>
    <property type="evidence" value="ECO:0007669"/>
    <property type="project" value="UniProtKB-UniRule"/>
</dbReference>
<dbReference type="GO" id="GO:0046872">
    <property type="term" value="F:metal ion binding"/>
    <property type="evidence" value="ECO:0007669"/>
    <property type="project" value="UniProtKB-UniRule"/>
</dbReference>
<dbReference type="GO" id="GO:0000166">
    <property type="term" value="F:nucleotide binding"/>
    <property type="evidence" value="ECO:0007669"/>
    <property type="project" value="UniProtKB-UniRule"/>
</dbReference>
<dbReference type="CDD" id="cd07402">
    <property type="entry name" value="MPP_GpdQ"/>
    <property type="match status" value="1"/>
</dbReference>
<dbReference type="Gene3D" id="3.60.21.10">
    <property type="match status" value="1"/>
</dbReference>
<dbReference type="HAMAP" id="MF_00905">
    <property type="entry name" value="cAMP_phosphodiest_CpdA"/>
    <property type="match status" value="1"/>
</dbReference>
<dbReference type="InterPro" id="IPR004843">
    <property type="entry name" value="Calcineurin-like_PHP_ApaH"/>
</dbReference>
<dbReference type="InterPro" id="IPR046379">
    <property type="entry name" value="cAMP_phosphodiest_CpdA"/>
</dbReference>
<dbReference type="InterPro" id="IPR050884">
    <property type="entry name" value="CNP_phosphodiesterase-III"/>
</dbReference>
<dbReference type="InterPro" id="IPR026575">
    <property type="entry name" value="GpdQ/CpdA-like"/>
</dbReference>
<dbReference type="InterPro" id="IPR029052">
    <property type="entry name" value="Metallo-depent_PP-like"/>
</dbReference>
<dbReference type="NCBIfam" id="NF008359">
    <property type="entry name" value="PRK11148.1"/>
    <property type="match status" value="1"/>
</dbReference>
<dbReference type="PANTHER" id="PTHR42988:SF2">
    <property type="entry name" value="CYCLIC NUCLEOTIDE PHOSPHODIESTERASE CBUA0032-RELATED"/>
    <property type="match status" value="1"/>
</dbReference>
<dbReference type="PANTHER" id="PTHR42988">
    <property type="entry name" value="PHOSPHOHYDROLASE"/>
    <property type="match status" value="1"/>
</dbReference>
<dbReference type="Pfam" id="PF00149">
    <property type="entry name" value="Metallophos"/>
    <property type="match status" value="1"/>
</dbReference>
<dbReference type="SUPFAM" id="SSF56300">
    <property type="entry name" value="Metallo-dependent phosphatases"/>
    <property type="match status" value="1"/>
</dbReference>
<protein>
    <recommendedName>
        <fullName evidence="1">3',5'-cyclic adenosine monophosphate phosphodiesterase CpdA</fullName>
        <shortName evidence="1">3',5'-cyclic AMP phosphodiesterase</shortName>
        <shortName evidence="1">cAMP phosphodiesterase</shortName>
        <ecNumber evidence="1">3.1.4.53</ecNumber>
    </recommendedName>
</protein>
<name>CPDA_VIBVU</name>
<evidence type="ECO:0000255" key="1">
    <source>
        <dbReference type="HAMAP-Rule" id="MF_00905"/>
    </source>
</evidence>
<evidence type="ECO:0000269" key="2">
    <source>
    </source>
</evidence>
<evidence type="ECO:0000305" key="3">
    <source>
    </source>
</evidence>
<accession>Q8DEI1</accession>
<gene>
    <name evidence="1" type="primary">cpdA</name>
    <name type="ordered locus">VV1_0608</name>
</gene>